<organismHost>
    <name type="scientific">Vertebrata</name>
    <dbReference type="NCBI Taxonomy" id="7742"/>
</organismHost>
<comment type="function">
    <text evidence="1">DNA-dependent ATPase required for providing the needed energy to achieve the termination of early transcripts. Acts in concert with the RAP94 subunit of the virion RNA polymerase and the capping enzyme/VTF to catalyze release of UUUUUNU-containing nascent RNA from the elongation complex. NPH-I must bind ssDNA in order to exhibit ATPase activity (By similarity).</text>
</comment>
<comment type="catalytic activity">
    <reaction>
        <text>a ribonucleoside 5'-triphosphate + H2O = a ribonucleoside 5'-diphosphate + phosphate + H(+)</text>
        <dbReference type="Rhea" id="RHEA:23680"/>
        <dbReference type="ChEBI" id="CHEBI:15377"/>
        <dbReference type="ChEBI" id="CHEBI:15378"/>
        <dbReference type="ChEBI" id="CHEBI:43474"/>
        <dbReference type="ChEBI" id="CHEBI:57930"/>
        <dbReference type="ChEBI" id="CHEBI:61557"/>
        <dbReference type="EC" id="3.6.1.15"/>
    </reaction>
</comment>
<comment type="subunit">
    <text evidence="1">Monomer. Interacts (via C-terminus) with RAP94 (via N-terminus). Interacts with the cap-specific mRNA (nucleoside-2'-O-)-methyltransferase (By similarity).</text>
</comment>
<comment type="subcellular location">
    <subcellularLocation>
        <location evidence="1">Virion</location>
    </subcellularLocation>
    <text evidence="1">Virion core enzyme.</text>
</comment>
<comment type="similarity">
    <text evidence="4">Belongs to the helicase family. NPH I subfamily.</text>
</comment>
<accession>O72907</accession>
<name>NTP1_FOWPN</name>
<protein>
    <recommendedName>
        <fullName>Nucleoside triphosphatase I</fullName>
        <ecNumber>3.6.1.15</ecNumber>
    </recommendedName>
    <alternativeName>
        <fullName>NPH-I</fullName>
    </alternativeName>
    <alternativeName>
        <fullName>Nucleoside triphosphate phosphohydrolase I</fullName>
        <shortName>NPH I</shortName>
    </alternativeName>
</protein>
<organism>
    <name type="scientific">Fowlpox virus (strain NVSL)</name>
    <name type="common">FPV</name>
    <dbReference type="NCBI Taxonomy" id="928301"/>
    <lineage>
        <taxon>Viruses</taxon>
        <taxon>Varidnaviria</taxon>
        <taxon>Bamfordvirae</taxon>
        <taxon>Nucleocytoviricota</taxon>
        <taxon>Pokkesviricetes</taxon>
        <taxon>Chitovirales</taxon>
        <taxon>Poxviridae</taxon>
        <taxon>Chordopoxvirinae</taxon>
        <taxon>Avipoxvirus</taxon>
        <taxon>Fowlpox virus</taxon>
    </lineage>
</organism>
<feature type="chain" id="PRO_0000099094" description="Nucleoside triphosphatase I">
    <location>
        <begin position="1"/>
        <end position="637"/>
    </location>
</feature>
<feature type="domain" description="Helicase ATP-binding" evidence="2">
    <location>
        <begin position="43"/>
        <end position="205"/>
    </location>
</feature>
<feature type="domain" description="Helicase C-terminal" evidence="3">
    <location>
        <begin position="358"/>
        <end position="537"/>
    </location>
</feature>
<feature type="region of interest" description="Binding to the cap-specific mRNA (nucleoside-2'-O-)-methyltransferase" evidence="1">
    <location>
        <begin position="459"/>
        <end position="526"/>
    </location>
</feature>
<feature type="short sequence motif" description="DEXH box">
    <location>
        <begin position="142"/>
        <end position="145"/>
    </location>
</feature>
<feature type="binding site" evidence="2">
    <location>
        <begin position="56"/>
        <end position="63"/>
    </location>
    <ligand>
        <name>ATP</name>
        <dbReference type="ChEBI" id="CHEBI:30616"/>
    </ligand>
</feature>
<proteinExistence type="inferred from homology"/>
<keyword id="KW-0067">ATP-binding</keyword>
<keyword id="KW-0238">DNA-binding</keyword>
<keyword id="KW-0378">Hydrolase</keyword>
<keyword id="KW-0547">Nucleotide-binding</keyword>
<keyword id="KW-1185">Reference proteome</keyword>
<keyword id="KW-0804">Transcription</keyword>
<keyword id="KW-0946">Virion</keyword>
<reference key="1">
    <citation type="submission" date="1998-05" db="EMBL/GenBank/DDBJ databases">
        <authorList>
            <person name="Skinner M.A."/>
        </authorList>
    </citation>
    <scope>NUCLEOTIDE SEQUENCE [GENOMIC DNA]</scope>
    <source>
        <strain>FP-9 / Isolate HP-440</strain>
    </source>
</reference>
<reference key="2">
    <citation type="journal article" date="1990" name="J. Gen. Virol.">
        <title>Analysis of the fowlpox virus genome region corresponding to the vaccinia virus D6 to A1 region: location of, and variation in, non-essential genes in poxviruses.</title>
        <authorList>
            <person name="Binns M.M."/>
            <person name="Britton B.S."/>
            <person name="Mason C."/>
            <person name="Boursnell M.E.G."/>
        </authorList>
    </citation>
    <scope>NUCLEOTIDE SEQUENCE [GENOMIC DNA]</scope>
</reference>
<reference key="3">
    <citation type="journal article" date="2000" name="J. Virol.">
        <title>The genome of fowlpox virus.</title>
        <authorList>
            <person name="Afonso C.L."/>
            <person name="Tulman E.R."/>
            <person name="Lu Z."/>
            <person name="Zsak L."/>
            <person name="Kutish G.F."/>
            <person name="Rock D.L."/>
        </authorList>
    </citation>
    <scope>NUCLEOTIDE SEQUENCE [LARGE SCALE GENOMIC DNA]</scope>
</reference>
<sequence length="637" mass="73774">MNTYAAYIDYALKKLDTFPVDMTGGNDNTVLLKDYQLFVAKVFLGLNSMNSILLFQETGVGKTITTVYMLKNLKKIYSEWTIIILVKKALIDDPWTHTILDYAPEVMKDCIIMNYDDQNFHNKFFTNIKSINVKSRIFIIIDECHNFISKSLTKEDNKKRNTKLVYNYIAKNLMQKNNKLICLSATPIVNDVREFQMLVNLLRPGILTPDKSLFYNKKLIDEKEIISKLGCICSYIVNNEASIFEDVENTTLFAKKTVHIKHVFMSKKQEELYLKARYLERKLGISVFKIYQRMASTFVFDDIPDKKKLTEEEYEKFVDSLSIDFKNTLYGKKISKQSLDILSAGGTINDIKDVKDIELYNYLYEHSCKFTFVCVSIIQSKGKCLVFEPFIRSSGIEILLQYFNVFGITYIEFSSRTKDIRSKSVSDFNKVDNTDGEITKVCVFSQSGNEGISFLSINDIFILDMTWNEASLKQIIGRAIRLNSHVNNPPERRYVNVYFVVAKLSSGRSSVDDILLDIIQSKSKEFSQLYKVFKHSSIEWIYSNYTDFQTVDDEKGFKKLISRNIILDENTITNKKKLTMGENIWYSFSSSLVSIHRGFKSMDNKIYDSEGFFITVLPDKPTIKIYEGKLIYILTVR</sequence>
<evidence type="ECO:0000250" key="1"/>
<evidence type="ECO:0000255" key="2">
    <source>
        <dbReference type="PROSITE-ProRule" id="PRU00541"/>
    </source>
</evidence>
<evidence type="ECO:0000255" key="3">
    <source>
        <dbReference type="PROSITE-ProRule" id="PRU00542"/>
    </source>
</evidence>
<evidence type="ECO:0000305" key="4"/>
<dbReference type="EC" id="3.6.1.15"/>
<dbReference type="EMBL" id="AJ005163">
    <property type="protein sequence ID" value="CAA06401.1"/>
    <property type="molecule type" value="Genomic_DNA"/>
</dbReference>
<dbReference type="EMBL" id="AF198100">
    <property type="protein sequence ID" value="AAF44396.1"/>
    <property type="molecule type" value="Genomic_DNA"/>
</dbReference>
<dbReference type="PIR" id="S42251">
    <property type="entry name" value="S42251"/>
</dbReference>
<dbReference type="RefSeq" id="NP_039015.1">
    <property type="nucleotide sequence ID" value="NC_002188.1"/>
</dbReference>
<dbReference type="SMR" id="O72907"/>
<dbReference type="GeneID" id="1486600"/>
<dbReference type="KEGG" id="vg:1486600"/>
<dbReference type="Proteomes" id="UP000008597">
    <property type="component" value="Segment"/>
</dbReference>
<dbReference type="GO" id="GO:0044423">
    <property type="term" value="C:virion component"/>
    <property type="evidence" value="ECO:0007669"/>
    <property type="project" value="UniProtKB-KW"/>
</dbReference>
<dbReference type="GO" id="GO:0005524">
    <property type="term" value="F:ATP binding"/>
    <property type="evidence" value="ECO:0007669"/>
    <property type="project" value="UniProtKB-KW"/>
</dbReference>
<dbReference type="GO" id="GO:0003677">
    <property type="term" value="F:DNA binding"/>
    <property type="evidence" value="ECO:0007669"/>
    <property type="project" value="UniProtKB-KW"/>
</dbReference>
<dbReference type="GO" id="GO:0017111">
    <property type="term" value="F:ribonucleoside triphosphate phosphatase activity"/>
    <property type="evidence" value="ECO:0007669"/>
    <property type="project" value="UniProtKB-EC"/>
</dbReference>
<dbReference type="GO" id="GO:0006281">
    <property type="term" value="P:DNA repair"/>
    <property type="evidence" value="ECO:0007669"/>
    <property type="project" value="TreeGrafter"/>
</dbReference>
<dbReference type="GO" id="GO:0006351">
    <property type="term" value="P:DNA-templated transcription"/>
    <property type="evidence" value="ECO:0007669"/>
    <property type="project" value="InterPro"/>
</dbReference>
<dbReference type="GO" id="GO:0031297">
    <property type="term" value="P:replication fork processing"/>
    <property type="evidence" value="ECO:0007669"/>
    <property type="project" value="TreeGrafter"/>
</dbReference>
<dbReference type="Gene3D" id="3.40.50.300">
    <property type="entry name" value="P-loop containing nucleotide triphosphate hydrolases"/>
    <property type="match status" value="2"/>
</dbReference>
<dbReference type="InterPro" id="IPR014001">
    <property type="entry name" value="Helicase_ATP-bd"/>
</dbReference>
<dbReference type="InterPro" id="IPR001650">
    <property type="entry name" value="Helicase_C-like"/>
</dbReference>
<dbReference type="InterPro" id="IPR013676">
    <property type="entry name" value="NPHI_C"/>
</dbReference>
<dbReference type="InterPro" id="IPR027417">
    <property type="entry name" value="P-loop_NTPase"/>
</dbReference>
<dbReference type="InterPro" id="IPR000330">
    <property type="entry name" value="SNF2_N"/>
</dbReference>
<dbReference type="PANTHER" id="PTHR45766">
    <property type="entry name" value="DNA ANNEALING HELICASE AND ENDONUCLEASE ZRANB3 FAMILY MEMBER"/>
    <property type="match status" value="1"/>
</dbReference>
<dbReference type="PANTHER" id="PTHR45766:SF6">
    <property type="entry name" value="SWI_SNF-RELATED MATRIX-ASSOCIATED ACTIN-DEPENDENT REGULATOR OF CHROMATIN SUBFAMILY A-LIKE PROTEIN 1"/>
    <property type="match status" value="1"/>
</dbReference>
<dbReference type="Pfam" id="PF00271">
    <property type="entry name" value="Helicase_C"/>
    <property type="match status" value="1"/>
</dbReference>
<dbReference type="Pfam" id="PF08469">
    <property type="entry name" value="NPHI_C"/>
    <property type="match status" value="1"/>
</dbReference>
<dbReference type="Pfam" id="PF00176">
    <property type="entry name" value="SNF2-rel_dom"/>
    <property type="match status" value="1"/>
</dbReference>
<dbReference type="SMART" id="SM00487">
    <property type="entry name" value="DEXDc"/>
    <property type="match status" value="1"/>
</dbReference>
<dbReference type="SMART" id="SM00490">
    <property type="entry name" value="HELICc"/>
    <property type="match status" value="1"/>
</dbReference>
<dbReference type="SUPFAM" id="SSF52540">
    <property type="entry name" value="P-loop containing nucleoside triphosphate hydrolases"/>
    <property type="match status" value="2"/>
</dbReference>
<dbReference type="PROSITE" id="PS51192">
    <property type="entry name" value="HELICASE_ATP_BIND_1"/>
    <property type="match status" value="1"/>
</dbReference>
<dbReference type="PROSITE" id="PS51194">
    <property type="entry name" value="HELICASE_CTER"/>
    <property type="match status" value="1"/>
</dbReference>
<gene>
    <name type="primary">NPH1</name>
    <name type="ordered locus">FPV052</name>
    <name type="ORF">FP-D11</name>
    <name type="ORF">FPD11</name>
</gene>